<accession>Q9ZCG0</accession>
<sequence length="491" mass="55260">MLELPIISITIFLPLISVLYILLFFNQNKKADKLSIYVAMLSSVLTFISTIYILIEFDVSNNTYQFVERYTWLDKIGLEFHVGVDGIAIFFVVLTSFLTLICIIGSLFTIKKYIKEYLVCFLLMESLCIGAFTSINLLLFYLFFEAILVPMYIIIGVWGGDNRIYAALKFFLYTFFGSVFFLLALIYIYSKIHSFDLTNILELIGNIPLFAQKILWWAIFIAFAIKTPMIPFHTWLPDAHVQAPTTGSVILAGILLKLGGYGFLRVLLPLFPNASQEFAIYVIYLSVIAIIYASLVALAQKDIKQMIAYSSIAHMGYVTIGIFSFTEIGISGAIFQMLSHGIISSSLFLIVGTLYERLHTKEIAKYGGVANKMPILATFFMIAMLSSIGLPSTSGFIGEFLSLLGIYKVNVVTAFIAALGIILGAVYMLKLYKEVMLGEITNTEIKHFRDLYKYEIISIAPLILLIIYFGLMPNSILNVFHLSVENLLIKF</sequence>
<reference key="1">
    <citation type="journal article" date="1998" name="Nature">
        <title>The genome sequence of Rickettsia prowazekii and the origin of mitochondria.</title>
        <authorList>
            <person name="Andersson S.G.E."/>
            <person name="Zomorodipour A."/>
            <person name="Andersson J.O."/>
            <person name="Sicheritz-Ponten T."/>
            <person name="Alsmark U.C.M."/>
            <person name="Podowski R.M."/>
            <person name="Naeslund A.K."/>
            <person name="Eriksson A.-S."/>
            <person name="Winkler H.H."/>
            <person name="Kurland C.G."/>
        </authorList>
    </citation>
    <scope>NUCLEOTIDE SEQUENCE [LARGE SCALE GENOMIC DNA]</scope>
    <source>
        <strain>Madrid E</strain>
    </source>
</reference>
<feature type="chain" id="PRO_0000118047" description="NADH-quinone oxidoreductase subunit M">
    <location>
        <begin position="1"/>
        <end position="491"/>
    </location>
</feature>
<feature type="transmembrane region" description="Helical" evidence="2">
    <location>
        <begin position="5"/>
        <end position="25"/>
    </location>
</feature>
<feature type="transmembrane region" description="Helical" evidence="2">
    <location>
        <begin position="35"/>
        <end position="55"/>
    </location>
</feature>
<feature type="transmembrane region" description="Helical" evidence="2">
    <location>
        <begin position="87"/>
        <end position="107"/>
    </location>
</feature>
<feature type="transmembrane region" description="Helical" evidence="2">
    <location>
        <begin position="116"/>
        <end position="136"/>
    </location>
</feature>
<feature type="transmembrane region" description="Helical" evidence="2">
    <location>
        <begin position="137"/>
        <end position="157"/>
    </location>
</feature>
<feature type="transmembrane region" description="Helical" evidence="2">
    <location>
        <begin position="170"/>
        <end position="190"/>
    </location>
</feature>
<feature type="transmembrane region" description="Helical" evidence="2">
    <location>
        <begin position="203"/>
        <end position="223"/>
    </location>
</feature>
<feature type="transmembrane region" description="Helical" evidence="2">
    <location>
        <begin position="249"/>
        <end position="269"/>
    </location>
</feature>
<feature type="transmembrane region" description="Helical" evidence="2">
    <location>
        <begin position="278"/>
        <end position="298"/>
    </location>
</feature>
<feature type="transmembrane region" description="Helical" evidence="2">
    <location>
        <begin position="315"/>
        <end position="335"/>
    </location>
</feature>
<feature type="transmembrane region" description="Helical" evidence="2">
    <location>
        <begin position="336"/>
        <end position="356"/>
    </location>
</feature>
<feature type="transmembrane region" description="Helical" evidence="2">
    <location>
        <begin position="373"/>
        <end position="393"/>
    </location>
</feature>
<feature type="transmembrane region" description="Helical" evidence="2">
    <location>
        <begin position="409"/>
        <end position="429"/>
    </location>
</feature>
<feature type="transmembrane region" description="Helical" evidence="2">
    <location>
        <begin position="456"/>
        <end position="476"/>
    </location>
</feature>
<evidence type="ECO:0000250" key="1"/>
<evidence type="ECO:0000255" key="2"/>
<evidence type="ECO:0000305" key="3"/>
<proteinExistence type="inferred from homology"/>
<dbReference type="EC" id="7.1.1.-"/>
<dbReference type="EMBL" id="AJ235273">
    <property type="protein sequence ID" value="CAA15219.1"/>
    <property type="molecule type" value="Genomic_DNA"/>
</dbReference>
<dbReference type="PIR" id="C71640">
    <property type="entry name" value="C71640"/>
</dbReference>
<dbReference type="RefSeq" id="NP_221143.1">
    <property type="nucleotide sequence ID" value="NC_000963.1"/>
</dbReference>
<dbReference type="RefSeq" id="WP_010886373.1">
    <property type="nucleotide sequence ID" value="NC_000963.1"/>
</dbReference>
<dbReference type="SMR" id="Q9ZCG0"/>
<dbReference type="STRING" id="272947.gene:17555862"/>
<dbReference type="EnsemblBacteria" id="CAA15219">
    <property type="protein sequence ID" value="CAA15219"/>
    <property type="gene ID" value="CAA15219"/>
</dbReference>
<dbReference type="KEGG" id="rpr:RP793"/>
<dbReference type="PATRIC" id="fig|272947.5.peg.829"/>
<dbReference type="eggNOG" id="COG1008">
    <property type="taxonomic scope" value="Bacteria"/>
</dbReference>
<dbReference type="HOGENOM" id="CLU_007100_4_4_5"/>
<dbReference type="OrthoDB" id="9768329at2"/>
<dbReference type="Proteomes" id="UP000002480">
    <property type="component" value="Chromosome"/>
</dbReference>
<dbReference type="GO" id="GO:0005886">
    <property type="term" value="C:plasma membrane"/>
    <property type="evidence" value="ECO:0007669"/>
    <property type="project" value="UniProtKB-SubCell"/>
</dbReference>
<dbReference type="GO" id="GO:0008137">
    <property type="term" value="F:NADH dehydrogenase (ubiquinone) activity"/>
    <property type="evidence" value="ECO:0007669"/>
    <property type="project" value="InterPro"/>
</dbReference>
<dbReference type="GO" id="GO:0048039">
    <property type="term" value="F:ubiquinone binding"/>
    <property type="evidence" value="ECO:0007669"/>
    <property type="project" value="TreeGrafter"/>
</dbReference>
<dbReference type="GO" id="GO:0042773">
    <property type="term" value="P:ATP synthesis coupled electron transport"/>
    <property type="evidence" value="ECO:0007669"/>
    <property type="project" value="InterPro"/>
</dbReference>
<dbReference type="GO" id="GO:0015990">
    <property type="term" value="P:electron transport coupled proton transport"/>
    <property type="evidence" value="ECO:0007669"/>
    <property type="project" value="TreeGrafter"/>
</dbReference>
<dbReference type="InterPro" id="IPR010227">
    <property type="entry name" value="NADH_Q_OxRdtase_chainM/4"/>
</dbReference>
<dbReference type="InterPro" id="IPR003918">
    <property type="entry name" value="NADH_UbQ_OxRdtase"/>
</dbReference>
<dbReference type="InterPro" id="IPR001750">
    <property type="entry name" value="ND/Mrp_TM"/>
</dbReference>
<dbReference type="NCBIfam" id="TIGR01972">
    <property type="entry name" value="NDH_I_M"/>
    <property type="match status" value="1"/>
</dbReference>
<dbReference type="NCBIfam" id="NF004499">
    <property type="entry name" value="PRK05846.1-3"/>
    <property type="match status" value="1"/>
</dbReference>
<dbReference type="NCBIfam" id="NF004506">
    <property type="entry name" value="PRK05846.2-6"/>
    <property type="match status" value="1"/>
</dbReference>
<dbReference type="PANTHER" id="PTHR43507">
    <property type="entry name" value="NADH-UBIQUINONE OXIDOREDUCTASE CHAIN 4"/>
    <property type="match status" value="1"/>
</dbReference>
<dbReference type="PANTHER" id="PTHR43507:SF1">
    <property type="entry name" value="NADH-UBIQUINONE OXIDOREDUCTASE CHAIN 4"/>
    <property type="match status" value="1"/>
</dbReference>
<dbReference type="Pfam" id="PF00361">
    <property type="entry name" value="Proton_antipo_M"/>
    <property type="match status" value="1"/>
</dbReference>
<dbReference type="PRINTS" id="PR01437">
    <property type="entry name" value="NUOXDRDTASE4"/>
</dbReference>
<keyword id="KW-1003">Cell membrane</keyword>
<keyword id="KW-0472">Membrane</keyword>
<keyword id="KW-0520">NAD</keyword>
<keyword id="KW-0874">Quinone</keyword>
<keyword id="KW-1185">Reference proteome</keyword>
<keyword id="KW-1278">Translocase</keyword>
<keyword id="KW-0812">Transmembrane</keyword>
<keyword id="KW-1133">Transmembrane helix</keyword>
<comment type="function">
    <text evidence="1">NDH-1 shuttles electrons from NADH, via FMN and iron-sulfur (Fe-S) centers, to quinones in the respiratory chain. Couples the redox reaction to proton translocation (for every two electrons transferred, four hydrogen ions are translocated across the cytoplasmic membrane), and thus conserves the redox energy in a proton gradient (By similarity).</text>
</comment>
<comment type="catalytic activity">
    <reaction>
        <text>a quinone + NADH + 5 H(+)(in) = a quinol + NAD(+) + 4 H(+)(out)</text>
        <dbReference type="Rhea" id="RHEA:57888"/>
        <dbReference type="ChEBI" id="CHEBI:15378"/>
        <dbReference type="ChEBI" id="CHEBI:24646"/>
        <dbReference type="ChEBI" id="CHEBI:57540"/>
        <dbReference type="ChEBI" id="CHEBI:57945"/>
        <dbReference type="ChEBI" id="CHEBI:132124"/>
    </reaction>
</comment>
<comment type="subcellular location">
    <subcellularLocation>
        <location evidence="3">Cell membrane</location>
        <topology evidence="3">Multi-pass membrane protein</topology>
    </subcellularLocation>
</comment>
<comment type="similarity">
    <text evidence="3">Belongs to the complex I subunit 4 family.</text>
</comment>
<name>NUOM_RICPR</name>
<protein>
    <recommendedName>
        <fullName>NADH-quinone oxidoreductase subunit M</fullName>
        <ecNumber>7.1.1.-</ecNumber>
    </recommendedName>
    <alternativeName>
        <fullName>NADH dehydrogenase I subunit M</fullName>
    </alternativeName>
    <alternativeName>
        <fullName>NDH-1 subunit M</fullName>
    </alternativeName>
</protein>
<gene>
    <name type="primary">nuoM</name>
    <name type="ordered locus">RP793</name>
</gene>
<organism>
    <name type="scientific">Rickettsia prowazekii (strain Madrid E)</name>
    <dbReference type="NCBI Taxonomy" id="272947"/>
    <lineage>
        <taxon>Bacteria</taxon>
        <taxon>Pseudomonadati</taxon>
        <taxon>Pseudomonadota</taxon>
        <taxon>Alphaproteobacteria</taxon>
        <taxon>Rickettsiales</taxon>
        <taxon>Rickettsiaceae</taxon>
        <taxon>Rickettsieae</taxon>
        <taxon>Rickettsia</taxon>
        <taxon>typhus group</taxon>
    </lineage>
</organism>